<accession>Q8BFW6</accession>
<accession>E9PYV0</accession>
<accession>Q3TC04</accession>
<accession>Q3TDX3</accession>
<protein>
    <recommendedName>
        <fullName evidence="5">Ectonucleoside triphosphate diphosphohydrolase 3</fullName>
        <shortName evidence="6">NTPDase 3</shortName>
        <ecNumber evidence="4">3.6.1.5</ecNumber>
    </recommendedName>
    <alternativeName>
        <fullName>Ecto-ATP diphosphohydrolase 3</fullName>
        <shortName>Ecto-ATPDase 3</shortName>
        <shortName>Ecto-ATPase 3</shortName>
    </alternativeName>
</protein>
<name>ENTP3_MOUSE</name>
<dbReference type="EC" id="3.6.1.5" evidence="4"/>
<dbReference type="EMBL" id="AY376710">
    <property type="protein sequence ID" value="AAQ86585.1"/>
    <property type="molecule type" value="mRNA"/>
</dbReference>
<dbReference type="EMBL" id="AY714060">
    <property type="protein sequence ID" value="AAU13839.1"/>
    <property type="molecule type" value="mRNA"/>
</dbReference>
<dbReference type="EMBL" id="AK046218">
    <property type="protein sequence ID" value="BAC32641.1"/>
    <property type="molecule type" value="mRNA"/>
</dbReference>
<dbReference type="EMBL" id="AK087561">
    <property type="protein sequence ID" value="BAC39928.1"/>
    <property type="molecule type" value="mRNA"/>
</dbReference>
<dbReference type="EMBL" id="AK169947">
    <property type="protein sequence ID" value="BAE41475.1"/>
    <property type="molecule type" value="mRNA"/>
</dbReference>
<dbReference type="EMBL" id="AK170974">
    <property type="protein sequence ID" value="BAE42153.1"/>
    <property type="molecule type" value="mRNA"/>
</dbReference>
<dbReference type="EMBL" id="BC079871">
    <property type="protein sequence ID" value="AAH79871.1"/>
    <property type="molecule type" value="mRNA"/>
</dbReference>
<dbReference type="CCDS" id="CCDS23629.1"/>
<dbReference type="RefSeq" id="NP_848791.3">
    <property type="nucleotide sequence ID" value="NM_178676.6"/>
</dbReference>
<dbReference type="SMR" id="Q8BFW6"/>
<dbReference type="FunCoup" id="Q8BFW6">
    <property type="interactions" value="337"/>
</dbReference>
<dbReference type="STRING" id="10090.ENSMUSP00000036830"/>
<dbReference type="GlyConnect" id="2274">
    <property type="glycosylation" value="3 N-Linked glycans (1 site)"/>
</dbReference>
<dbReference type="GlyCosmos" id="Q8BFW6">
    <property type="glycosylation" value="8 sites, 3 glycans"/>
</dbReference>
<dbReference type="GlyGen" id="Q8BFW6">
    <property type="glycosylation" value="9 sites, 6 N-linked glycans (3 sites), 1 O-linked glycan (1 site)"/>
</dbReference>
<dbReference type="iPTMnet" id="Q8BFW6"/>
<dbReference type="PhosphoSitePlus" id="Q8BFW6"/>
<dbReference type="PaxDb" id="10090-ENSMUSP00000036830"/>
<dbReference type="ProteomicsDB" id="330510"/>
<dbReference type="Antibodypedia" id="29006">
    <property type="antibodies" value="271 antibodies from 32 providers"/>
</dbReference>
<dbReference type="DNASU" id="215446"/>
<dbReference type="Ensembl" id="ENSMUST00000047687.9">
    <property type="protein sequence ID" value="ENSMUSP00000036830.8"/>
    <property type="gene ID" value="ENSMUSG00000041608.9"/>
</dbReference>
<dbReference type="GeneID" id="215446"/>
<dbReference type="KEGG" id="mmu:215446"/>
<dbReference type="UCSC" id="uc009scq.2">
    <property type="organism name" value="mouse"/>
</dbReference>
<dbReference type="AGR" id="MGI:1321386"/>
<dbReference type="CTD" id="956"/>
<dbReference type="MGI" id="MGI:1321386">
    <property type="gene designation" value="Entpd3"/>
</dbReference>
<dbReference type="VEuPathDB" id="HostDB:ENSMUSG00000041608"/>
<dbReference type="eggNOG" id="KOG1386">
    <property type="taxonomic scope" value="Eukaryota"/>
</dbReference>
<dbReference type="GeneTree" id="ENSGT01110000267162"/>
<dbReference type="HOGENOM" id="CLU_010246_2_3_1"/>
<dbReference type="InParanoid" id="Q8BFW6"/>
<dbReference type="OMA" id="GNAISDM"/>
<dbReference type="OrthoDB" id="6372431at2759"/>
<dbReference type="PhylomeDB" id="Q8BFW6"/>
<dbReference type="TreeFam" id="TF332859"/>
<dbReference type="BRENDA" id="3.6.1.5">
    <property type="organism ID" value="3474"/>
</dbReference>
<dbReference type="Reactome" id="R-MMU-8850843">
    <property type="pathway name" value="Phosphate bond hydrolysis by NTPDase proteins"/>
</dbReference>
<dbReference type="SABIO-RK" id="Q8BFW6"/>
<dbReference type="BioGRID-ORCS" id="215446">
    <property type="hits" value="0 hits in 77 CRISPR screens"/>
</dbReference>
<dbReference type="ChiTaRS" id="Entpd3">
    <property type="organism name" value="mouse"/>
</dbReference>
<dbReference type="PRO" id="PR:Q8BFW6"/>
<dbReference type="Proteomes" id="UP000000589">
    <property type="component" value="Chromosome 9"/>
</dbReference>
<dbReference type="RNAct" id="Q8BFW6">
    <property type="molecule type" value="protein"/>
</dbReference>
<dbReference type="Bgee" id="ENSMUSG00000041608">
    <property type="expression patterns" value="Expressed in humerus cartilage element and 160 other cell types or tissues"/>
</dbReference>
<dbReference type="GO" id="GO:0005886">
    <property type="term" value="C:plasma membrane"/>
    <property type="evidence" value="ECO:0000314"/>
    <property type="project" value="MGI"/>
</dbReference>
<dbReference type="GO" id="GO:0004050">
    <property type="term" value="F:apyrase activity"/>
    <property type="evidence" value="ECO:0007669"/>
    <property type="project" value="UniProtKB-EC"/>
</dbReference>
<dbReference type="GO" id="GO:0005524">
    <property type="term" value="F:ATP binding"/>
    <property type="evidence" value="ECO:0007669"/>
    <property type="project" value="UniProtKB-KW"/>
</dbReference>
<dbReference type="GO" id="GO:0017110">
    <property type="term" value="F:nucleoside diphosphate phosphatase activity"/>
    <property type="evidence" value="ECO:0000314"/>
    <property type="project" value="MGI"/>
</dbReference>
<dbReference type="GO" id="GO:0017111">
    <property type="term" value="F:ribonucleoside triphosphate phosphatase activity"/>
    <property type="evidence" value="ECO:0000314"/>
    <property type="project" value="MGI"/>
</dbReference>
<dbReference type="GO" id="GO:0009134">
    <property type="term" value="P:nucleoside diphosphate catabolic process"/>
    <property type="evidence" value="ECO:0000314"/>
    <property type="project" value="MGI"/>
</dbReference>
<dbReference type="GO" id="GO:0009143">
    <property type="term" value="P:nucleoside triphosphate catabolic process"/>
    <property type="evidence" value="ECO:0000314"/>
    <property type="project" value="MGI"/>
</dbReference>
<dbReference type="CDD" id="cd24112">
    <property type="entry name" value="ASKHA_NBD_NTPDase3"/>
    <property type="match status" value="1"/>
</dbReference>
<dbReference type="FunFam" id="3.30.420.150:FF:000002">
    <property type="entry name" value="Ectonucleoside triphosphate diphosphohydrolase 1"/>
    <property type="match status" value="1"/>
</dbReference>
<dbReference type="FunFam" id="3.30.420.40:FF:000068">
    <property type="entry name" value="Ectonucleoside triphosphate diphosphohydrolase 1"/>
    <property type="match status" value="1"/>
</dbReference>
<dbReference type="Gene3D" id="3.30.420.40">
    <property type="match status" value="1"/>
</dbReference>
<dbReference type="Gene3D" id="3.30.420.150">
    <property type="entry name" value="Exopolyphosphatase. Domain 2"/>
    <property type="match status" value="1"/>
</dbReference>
<dbReference type="InterPro" id="IPR000407">
    <property type="entry name" value="GDA1_CD39_NTPase"/>
</dbReference>
<dbReference type="PANTHER" id="PTHR11782">
    <property type="entry name" value="ADENOSINE/GUANOSINE DIPHOSPHATASE"/>
    <property type="match status" value="1"/>
</dbReference>
<dbReference type="PANTHER" id="PTHR11782:SF38">
    <property type="entry name" value="ECTONUCLEOSIDE TRIPHOSPHATE DIPHOSPHOHYDROLASE 3"/>
    <property type="match status" value="1"/>
</dbReference>
<dbReference type="Pfam" id="PF01150">
    <property type="entry name" value="GDA1_CD39"/>
    <property type="match status" value="1"/>
</dbReference>
<dbReference type="PROSITE" id="PS01238">
    <property type="entry name" value="GDA1_CD39_NTPASE"/>
    <property type="match status" value="1"/>
</dbReference>
<reference key="1">
    <citation type="journal article" date="2004" name="Biochem. Pharmacol.">
        <title>Cloning and characterization of mouse nucleoside triphosphate diphosphohydrolase-3.</title>
        <authorList>
            <person name="Lavoie E.G."/>
            <person name="Kukulski F."/>
            <person name="Levesque S.A."/>
            <person name="Lecka J."/>
            <person name="Sevigny J."/>
        </authorList>
    </citation>
    <scope>NUCLEOTIDE SEQUENCE [MRNA]</scope>
    <scope>FUNCTION</scope>
    <scope>CATALYTIC ACTIVITY</scope>
    <scope>BIOPHYSICOCHEMICAL PROPERTIES</scope>
    <scope>COFACTOR</scope>
    <scope>SUBCELLULAR LOCATION</scope>
    <source>
        <strain>CD-1</strain>
        <tissue>Spleen</tissue>
    </source>
</reference>
<reference key="2">
    <citation type="submission" date="2004-08" db="EMBL/GenBank/DDBJ databases">
        <title>Sequencing of mouse brain NTPDase3.</title>
        <authorList>
            <person name="Crawford P.A."/>
            <person name="Kirley T.L."/>
        </authorList>
    </citation>
    <scope>NUCLEOTIDE SEQUENCE [MRNA]</scope>
    <source>
        <strain>C57BL/6J</strain>
        <tissue>Brain</tissue>
    </source>
</reference>
<reference key="3">
    <citation type="journal article" date="2005" name="Science">
        <title>The transcriptional landscape of the mammalian genome.</title>
        <authorList>
            <person name="Carninci P."/>
            <person name="Kasukawa T."/>
            <person name="Katayama S."/>
            <person name="Gough J."/>
            <person name="Frith M.C."/>
            <person name="Maeda N."/>
            <person name="Oyama R."/>
            <person name="Ravasi T."/>
            <person name="Lenhard B."/>
            <person name="Wells C."/>
            <person name="Kodzius R."/>
            <person name="Shimokawa K."/>
            <person name="Bajic V.B."/>
            <person name="Brenner S.E."/>
            <person name="Batalov S."/>
            <person name="Forrest A.R."/>
            <person name="Zavolan M."/>
            <person name="Davis M.J."/>
            <person name="Wilming L.G."/>
            <person name="Aidinis V."/>
            <person name="Allen J.E."/>
            <person name="Ambesi-Impiombato A."/>
            <person name="Apweiler R."/>
            <person name="Aturaliya R.N."/>
            <person name="Bailey T.L."/>
            <person name="Bansal M."/>
            <person name="Baxter L."/>
            <person name="Beisel K.W."/>
            <person name="Bersano T."/>
            <person name="Bono H."/>
            <person name="Chalk A.M."/>
            <person name="Chiu K.P."/>
            <person name="Choudhary V."/>
            <person name="Christoffels A."/>
            <person name="Clutterbuck D.R."/>
            <person name="Crowe M.L."/>
            <person name="Dalla E."/>
            <person name="Dalrymple B.P."/>
            <person name="de Bono B."/>
            <person name="Della Gatta G."/>
            <person name="di Bernardo D."/>
            <person name="Down T."/>
            <person name="Engstrom P."/>
            <person name="Fagiolini M."/>
            <person name="Faulkner G."/>
            <person name="Fletcher C.F."/>
            <person name="Fukushima T."/>
            <person name="Furuno M."/>
            <person name="Futaki S."/>
            <person name="Gariboldi M."/>
            <person name="Georgii-Hemming P."/>
            <person name="Gingeras T.R."/>
            <person name="Gojobori T."/>
            <person name="Green R.E."/>
            <person name="Gustincich S."/>
            <person name="Harbers M."/>
            <person name="Hayashi Y."/>
            <person name="Hensch T.K."/>
            <person name="Hirokawa N."/>
            <person name="Hill D."/>
            <person name="Huminiecki L."/>
            <person name="Iacono M."/>
            <person name="Ikeo K."/>
            <person name="Iwama A."/>
            <person name="Ishikawa T."/>
            <person name="Jakt M."/>
            <person name="Kanapin A."/>
            <person name="Katoh M."/>
            <person name="Kawasawa Y."/>
            <person name="Kelso J."/>
            <person name="Kitamura H."/>
            <person name="Kitano H."/>
            <person name="Kollias G."/>
            <person name="Krishnan S.P."/>
            <person name="Kruger A."/>
            <person name="Kummerfeld S.K."/>
            <person name="Kurochkin I.V."/>
            <person name="Lareau L.F."/>
            <person name="Lazarevic D."/>
            <person name="Lipovich L."/>
            <person name="Liu J."/>
            <person name="Liuni S."/>
            <person name="McWilliam S."/>
            <person name="Madan Babu M."/>
            <person name="Madera M."/>
            <person name="Marchionni L."/>
            <person name="Matsuda H."/>
            <person name="Matsuzawa S."/>
            <person name="Miki H."/>
            <person name="Mignone F."/>
            <person name="Miyake S."/>
            <person name="Morris K."/>
            <person name="Mottagui-Tabar S."/>
            <person name="Mulder N."/>
            <person name="Nakano N."/>
            <person name="Nakauchi H."/>
            <person name="Ng P."/>
            <person name="Nilsson R."/>
            <person name="Nishiguchi S."/>
            <person name="Nishikawa S."/>
            <person name="Nori F."/>
            <person name="Ohara O."/>
            <person name="Okazaki Y."/>
            <person name="Orlando V."/>
            <person name="Pang K.C."/>
            <person name="Pavan W.J."/>
            <person name="Pavesi G."/>
            <person name="Pesole G."/>
            <person name="Petrovsky N."/>
            <person name="Piazza S."/>
            <person name="Reed J."/>
            <person name="Reid J.F."/>
            <person name="Ring B.Z."/>
            <person name="Ringwald M."/>
            <person name="Rost B."/>
            <person name="Ruan Y."/>
            <person name="Salzberg S.L."/>
            <person name="Sandelin A."/>
            <person name="Schneider C."/>
            <person name="Schoenbach C."/>
            <person name="Sekiguchi K."/>
            <person name="Semple C.A."/>
            <person name="Seno S."/>
            <person name="Sessa L."/>
            <person name="Sheng Y."/>
            <person name="Shibata Y."/>
            <person name="Shimada H."/>
            <person name="Shimada K."/>
            <person name="Silva D."/>
            <person name="Sinclair B."/>
            <person name="Sperling S."/>
            <person name="Stupka E."/>
            <person name="Sugiura K."/>
            <person name="Sultana R."/>
            <person name="Takenaka Y."/>
            <person name="Taki K."/>
            <person name="Tammoja K."/>
            <person name="Tan S.L."/>
            <person name="Tang S."/>
            <person name="Taylor M.S."/>
            <person name="Tegner J."/>
            <person name="Teichmann S.A."/>
            <person name="Ueda H.R."/>
            <person name="van Nimwegen E."/>
            <person name="Verardo R."/>
            <person name="Wei C.L."/>
            <person name="Yagi K."/>
            <person name="Yamanishi H."/>
            <person name="Zabarovsky E."/>
            <person name="Zhu S."/>
            <person name="Zimmer A."/>
            <person name="Hide W."/>
            <person name="Bult C."/>
            <person name="Grimmond S.M."/>
            <person name="Teasdale R.D."/>
            <person name="Liu E.T."/>
            <person name="Brusic V."/>
            <person name="Quackenbush J."/>
            <person name="Wahlestedt C."/>
            <person name="Mattick J.S."/>
            <person name="Hume D.A."/>
            <person name="Kai C."/>
            <person name="Sasaki D."/>
            <person name="Tomaru Y."/>
            <person name="Fukuda S."/>
            <person name="Kanamori-Katayama M."/>
            <person name="Suzuki M."/>
            <person name="Aoki J."/>
            <person name="Arakawa T."/>
            <person name="Iida J."/>
            <person name="Imamura K."/>
            <person name="Itoh M."/>
            <person name="Kato T."/>
            <person name="Kawaji H."/>
            <person name="Kawagashira N."/>
            <person name="Kawashima T."/>
            <person name="Kojima M."/>
            <person name="Kondo S."/>
            <person name="Konno H."/>
            <person name="Nakano K."/>
            <person name="Ninomiya N."/>
            <person name="Nishio T."/>
            <person name="Okada M."/>
            <person name="Plessy C."/>
            <person name="Shibata K."/>
            <person name="Shiraki T."/>
            <person name="Suzuki S."/>
            <person name="Tagami M."/>
            <person name="Waki K."/>
            <person name="Watahiki A."/>
            <person name="Okamura-Oho Y."/>
            <person name="Suzuki H."/>
            <person name="Kawai J."/>
            <person name="Hayashizaki Y."/>
        </authorList>
    </citation>
    <scope>NUCLEOTIDE SEQUENCE [LARGE SCALE MRNA]</scope>
    <source>
        <strain>C57BL/6J</strain>
        <strain>NOD</strain>
        <tissue>Corpora quadrigemina</tissue>
        <tissue>Oviduct</tissue>
    </source>
</reference>
<reference key="4">
    <citation type="journal article" date="2009" name="PLoS Biol.">
        <title>Lineage-specific biology revealed by a finished genome assembly of the mouse.</title>
        <authorList>
            <person name="Church D.M."/>
            <person name="Goodstadt L."/>
            <person name="Hillier L.W."/>
            <person name="Zody M.C."/>
            <person name="Goldstein S."/>
            <person name="She X."/>
            <person name="Bult C.J."/>
            <person name="Agarwala R."/>
            <person name="Cherry J.L."/>
            <person name="DiCuccio M."/>
            <person name="Hlavina W."/>
            <person name="Kapustin Y."/>
            <person name="Meric P."/>
            <person name="Maglott D."/>
            <person name="Birtle Z."/>
            <person name="Marques A.C."/>
            <person name="Graves T."/>
            <person name="Zhou S."/>
            <person name="Teague B."/>
            <person name="Potamousis K."/>
            <person name="Churas C."/>
            <person name="Place M."/>
            <person name="Herschleb J."/>
            <person name="Runnheim R."/>
            <person name="Forrest D."/>
            <person name="Amos-Landgraf J."/>
            <person name="Schwartz D.C."/>
            <person name="Cheng Z."/>
            <person name="Lindblad-Toh K."/>
            <person name="Eichler E.E."/>
            <person name="Ponting C.P."/>
        </authorList>
    </citation>
    <scope>NUCLEOTIDE SEQUENCE [LARGE SCALE GENOMIC DNA]</scope>
    <source>
        <strain>C57BL/6J</strain>
    </source>
</reference>
<reference key="5">
    <citation type="journal article" date="2004" name="Genome Res.">
        <title>The status, quality, and expansion of the NIH full-length cDNA project: the Mammalian Gene Collection (MGC).</title>
        <authorList>
            <consortium name="The MGC Project Team"/>
        </authorList>
    </citation>
    <scope>NUCLEOTIDE SEQUENCE [LARGE SCALE MRNA]</scope>
    <source>
        <strain>C57BL/6J</strain>
        <tissue>Brain</tissue>
    </source>
</reference>
<reference evidence="9" key="6">
    <citation type="journal article" date="2010" name="Cell">
        <title>A tissue-specific atlas of mouse protein phosphorylation and expression.</title>
        <authorList>
            <person name="Huttlin E.L."/>
            <person name="Jedrychowski M.P."/>
            <person name="Elias J.E."/>
            <person name="Goswami T."/>
            <person name="Rad R."/>
            <person name="Beausoleil S.A."/>
            <person name="Villen J."/>
            <person name="Haas W."/>
            <person name="Sowa M.E."/>
            <person name="Gygi S.P."/>
        </authorList>
    </citation>
    <scope>IDENTIFICATION BY MASS SPECTROMETRY [LARGE SCALE ANALYSIS]</scope>
</reference>
<proteinExistence type="evidence at protein level"/>
<organism>
    <name type="scientific">Mus musculus</name>
    <name type="common">Mouse</name>
    <dbReference type="NCBI Taxonomy" id="10090"/>
    <lineage>
        <taxon>Eukaryota</taxon>
        <taxon>Metazoa</taxon>
        <taxon>Chordata</taxon>
        <taxon>Craniata</taxon>
        <taxon>Vertebrata</taxon>
        <taxon>Euteleostomi</taxon>
        <taxon>Mammalia</taxon>
        <taxon>Eutheria</taxon>
        <taxon>Euarchontoglires</taxon>
        <taxon>Glires</taxon>
        <taxon>Rodentia</taxon>
        <taxon>Myomorpha</taxon>
        <taxon>Muroidea</taxon>
        <taxon>Muridae</taxon>
        <taxon>Murinae</taxon>
        <taxon>Mus</taxon>
        <taxon>Mus</taxon>
    </lineage>
</organism>
<feature type="chain" id="PRO_0000455156" description="Ectonucleoside triphosphate diphosphohydrolase 3">
    <location>
        <begin position="1"/>
        <end position="529"/>
    </location>
</feature>
<feature type="topological domain" description="Cytoplasmic" evidence="7">
    <location>
        <begin position="1"/>
        <end position="22"/>
    </location>
</feature>
<feature type="transmembrane region" description="Helical" evidence="3">
    <location>
        <begin position="23"/>
        <end position="43"/>
    </location>
</feature>
<feature type="topological domain" description="Extracellular" evidence="7">
    <location>
        <begin position="44"/>
        <end position="485"/>
    </location>
</feature>
<feature type="transmembrane region" description="Helical" evidence="3">
    <location>
        <begin position="486"/>
        <end position="506"/>
    </location>
</feature>
<feature type="topological domain" description="Cytoplasmic" evidence="7">
    <location>
        <begin position="507"/>
        <end position="529"/>
    </location>
</feature>
<feature type="active site" description="Proton acceptor" evidence="1">
    <location>
        <position position="182"/>
    </location>
</feature>
<feature type="binding site" evidence="1">
    <location>
        <begin position="222"/>
        <end position="226"/>
    </location>
    <ligand>
        <name>ATP</name>
        <dbReference type="ChEBI" id="CHEBI:30616"/>
    </ligand>
</feature>
<feature type="glycosylation site" description="N-linked (GlcNAc...) asparagine" evidence="3">
    <location>
        <position position="81"/>
    </location>
</feature>
<feature type="glycosylation site" description="N-linked (GlcNAc...) asparagine" evidence="3">
    <location>
        <position position="149"/>
    </location>
</feature>
<feature type="glycosylation site" description="N-linked (GlcNAc...) asparagine" evidence="3">
    <location>
        <position position="238"/>
    </location>
</feature>
<feature type="glycosylation site" description="N-linked (GlcNAc...) asparagine" evidence="3">
    <location>
        <position position="284"/>
    </location>
</feature>
<feature type="glycosylation site" description="N-linked (GlcNAc...) asparagine" evidence="3">
    <location>
        <position position="318"/>
    </location>
</feature>
<feature type="glycosylation site" description="N-linked (GlcNAc...) asparagine" evidence="3">
    <location>
        <position position="381"/>
    </location>
</feature>
<feature type="glycosylation site" description="N-linked (GlcNAc...) asparagine" evidence="3">
    <location>
        <position position="392"/>
    </location>
</feature>
<feature type="glycosylation site" description="N-linked (GlcNAc...) asparagine" evidence="3">
    <location>
        <position position="454"/>
    </location>
</feature>
<feature type="disulfide bond" evidence="2">
    <location>
        <begin position="92"/>
        <end position="116"/>
    </location>
</feature>
<feature type="disulfide bond" evidence="2">
    <location>
        <begin position="261"/>
        <end position="308"/>
    </location>
</feature>
<feature type="disulfide bond" evidence="2">
    <location>
        <begin position="289"/>
        <end position="334"/>
    </location>
</feature>
<feature type="disulfide bond" evidence="2">
    <location>
        <begin position="347"/>
        <end position="353"/>
    </location>
</feature>
<feature type="disulfide bond" evidence="2">
    <location>
        <begin position="399"/>
        <end position="422"/>
    </location>
</feature>
<comment type="function">
    <text evidence="4">Catalyzes the hydrolysis of nucleoside triphosphates and diphosphates (PubMed:15130768). Has a threefold preference for the hydrolysis of ATP and UTP over ADP and UDP (PubMed:15130768).</text>
</comment>
<comment type="catalytic activity">
    <reaction evidence="4">
        <text>a ribonucleoside 5'-triphosphate + 2 H2O = a ribonucleoside 5'-phosphate + 2 phosphate + 2 H(+)</text>
        <dbReference type="Rhea" id="RHEA:36795"/>
        <dbReference type="ChEBI" id="CHEBI:15377"/>
        <dbReference type="ChEBI" id="CHEBI:15378"/>
        <dbReference type="ChEBI" id="CHEBI:43474"/>
        <dbReference type="ChEBI" id="CHEBI:58043"/>
        <dbReference type="ChEBI" id="CHEBI:61557"/>
        <dbReference type="EC" id="3.6.1.5"/>
    </reaction>
</comment>
<comment type="cofactor">
    <cofactor evidence="4">
        <name>Ca(2+)</name>
        <dbReference type="ChEBI" id="CHEBI:29108"/>
    </cofactor>
    <cofactor evidence="4">
        <name>Mg(2+)</name>
        <dbReference type="ChEBI" id="CHEBI:18420"/>
    </cofactor>
</comment>
<comment type="biophysicochemical properties">
    <kinetics>
        <KM evidence="4">11 mM for ATP (at pH 7.4)</KM>
        <KM evidence="4">10 mM for UTP (at pH 7.4)</KM>
        <KM evidence="4">19 mM for ADP (at pH 7.4)</KM>
        <KM evidence="4">27 mM for UDP (at pH 7.4)</KM>
    </kinetics>
</comment>
<comment type="subcellular location">
    <subcellularLocation>
        <location evidence="4">Cell membrane</location>
        <topology evidence="3">Multi-pass membrane protein</topology>
    </subcellularLocation>
</comment>
<comment type="similarity">
    <text evidence="7">Belongs to the GDA1/CD39 NTPase family.</text>
</comment>
<evidence type="ECO:0000250" key="1">
    <source>
        <dbReference type="UniProtKB" id="O35795"/>
    </source>
</evidence>
<evidence type="ECO:0000250" key="2">
    <source>
        <dbReference type="UniProtKB" id="O75355"/>
    </source>
</evidence>
<evidence type="ECO:0000255" key="3"/>
<evidence type="ECO:0000269" key="4">
    <source>
    </source>
</evidence>
<evidence type="ECO:0000303" key="5">
    <source>
    </source>
</evidence>
<evidence type="ECO:0000303" key="6">
    <source ref="2"/>
</evidence>
<evidence type="ECO:0000305" key="7"/>
<evidence type="ECO:0000312" key="8">
    <source>
        <dbReference type="MGI" id="MGI:1321386"/>
    </source>
</evidence>
<evidence type="ECO:0007744" key="9">
    <source>
    </source>
</evidence>
<keyword id="KW-0067">ATP-binding</keyword>
<keyword id="KW-0106">Calcium</keyword>
<keyword id="KW-1003">Cell membrane</keyword>
<keyword id="KW-1015">Disulfide bond</keyword>
<keyword id="KW-0325">Glycoprotein</keyword>
<keyword id="KW-0378">Hydrolase</keyword>
<keyword id="KW-0460">Magnesium</keyword>
<keyword id="KW-0472">Membrane</keyword>
<keyword id="KW-0547">Nucleotide-binding</keyword>
<keyword id="KW-1185">Reference proteome</keyword>
<keyword id="KW-0812">Transmembrane</keyword>
<keyword id="KW-1133">Transmembrane helix</keyword>
<gene>
    <name evidence="8" type="primary">Entpd3</name>
</gene>
<sequence length="529" mass="58984">MFTVMTRQPCEQAGFRALSRTPAIVTLVVLLVSIVVLVTLTLIQIRHPQVLPPGLKYGVVLDAGSSRTTVYVYQWPAEKENNTGVVSQTFRCSVKGSGISSYENNPQDAPKAFEDCILKVKEQVPEHLHGSTRIYLGATAGMRLLRLQNETAAREVLESIQSYFKSQPFDFRGAQIISGQEEGVYGWITANYIMGNFLEKNLWHMWVHPHGVDTTGALDLGGASTQISFVAGEKMEPNASDTVQVSLYGYTYTLYTHSFQCYGQNEAEKKFLAMLLQSPSTEANISNPCYPQGYSTAFTLGHVFGSLCTEKQRPESYNSSKSVTFMGTGDPRLCREKVASVFDFNACQEQDACSFDGIYQPKVQGPFVAFAGFYYTASALNLSGSFSLTSFNDSSWDFCRHTWSELPALLSRFDETYARSYCFSAHYIYHLLVNGYKFTEETWPQIRFEKEVGNSSIAWSLGYMLSLTNQIPAGSPLIHLPIQPPVFMGVLAFFTAIALLCLAFLLYLCSSFRTKERSENAFDQAVDSD</sequence>